<accession>P46667</accession>
<feature type="chain" id="PRO_0000048823" description="Homeobox-leucine zipper protein ATHB-5">
    <location>
        <begin position="1"/>
        <end position="312"/>
    </location>
</feature>
<feature type="DNA-binding region" description="Homeobox" evidence="1">
    <location>
        <begin position="69"/>
        <end position="128"/>
    </location>
</feature>
<feature type="region of interest" description="Disordered" evidence="2">
    <location>
        <begin position="1"/>
        <end position="33"/>
    </location>
</feature>
<feature type="region of interest" description="Leucine-zipper">
    <location>
        <begin position="129"/>
        <end position="164"/>
    </location>
</feature>
<feature type="compositionally biased region" description="Polar residues" evidence="2">
    <location>
        <begin position="23"/>
        <end position="33"/>
    </location>
</feature>
<evidence type="ECO:0000255" key="1">
    <source>
        <dbReference type="PROSITE-ProRule" id="PRU00108"/>
    </source>
</evidence>
<evidence type="ECO:0000256" key="2">
    <source>
        <dbReference type="SAM" id="MobiDB-lite"/>
    </source>
</evidence>
<evidence type="ECO:0000269" key="3">
    <source>
    </source>
</evidence>
<evidence type="ECO:0000269" key="4">
    <source>
    </source>
</evidence>
<evidence type="ECO:0000305" key="5"/>
<proteinExistence type="evidence at protein level"/>
<gene>
    <name type="primary">ATHB-5</name>
    <name type="ordered locus">At5g65310</name>
    <name type="ORF">MNA5.4</name>
</gene>
<organism>
    <name type="scientific">Arabidopsis thaliana</name>
    <name type="common">Mouse-ear cress</name>
    <dbReference type="NCBI Taxonomy" id="3702"/>
    <lineage>
        <taxon>Eukaryota</taxon>
        <taxon>Viridiplantae</taxon>
        <taxon>Streptophyta</taxon>
        <taxon>Embryophyta</taxon>
        <taxon>Tracheophyta</taxon>
        <taxon>Spermatophyta</taxon>
        <taxon>Magnoliopsida</taxon>
        <taxon>eudicotyledons</taxon>
        <taxon>Gunneridae</taxon>
        <taxon>Pentapetalae</taxon>
        <taxon>rosids</taxon>
        <taxon>malvids</taxon>
        <taxon>Brassicales</taxon>
        <taxon>Brassicaceae</taxon>
        <taxon>Camelineae</taxon>
        <taxon>Arabidopsis</taxon>
    </lineage>
</organism>
<comment type="function">
    <text evidence="3">Probable transcription factor that acts as a positive regulator of ABA-responsiveness, mediating the inhibitory effect of ABA on growth during seedling establishment. Binds to the DNA sequence 5'-CAATNATTG-3'.</text>
</comment>
<comment type="subunit">
    <text>Interacts with DNA as homodimer.</text>
</comment>
<comment type="subcellular location">
    <subcellularLocation>
        <location>Nucleus</location>
    </subcellularLocation>
</comment>
<comment type="alternative products">
    <event type="alternative splicing"/>
    <isoform>
        <id>P46667-1</id>
        <name>1</name>
        <sequence type="displayed"/>
    </isoform>
    <text>A number of isoforms are produced. According to EST sequences.</text>
</comment>
<comment type="tissue specificity">
    <text evidence="4">Widely expressed.</text>
</comment>
<comment type="developmental stage">
    <text evidence="3">Localized primarily to the hypocotyl of germinating seedlings.</text>
</comment>
<comment type="induction">
    <text evidence="3 4">Down-regulated by abscisic acid (ABA) and by salt stress.</text>
</comment>
<comment type="similarity">
    <text evidence="5">Belongs to the HD-ZIP homeobox family. Class I subfamily.</text>
</comment>
<protein>
    <recommendedName>
        <fullName>Homeobox-leucine zipper protein ATHB-5</fullName>
    </recommendedName>
    <alternativeName>
        <fullName>HD-ZIP protein ATHB-5</fullName>
    </alternativeName>
    <alternativeName>
        <fullName>Homeodomain transcription factor ATHB-5</fullName>
    </alternativeName>
</protein>
<name>ATHB5_ARATH</name>
<dbReference type="EMBL" id="X67033">
    <property type="protein sequence ID" value="CAA47426.1"/>
    <property type="molecule type" value="mRNA"/>
</dbReference>
<dbReference type="EMBL" id="AB011479">
    <property type="protein sequence ID" value="BAB11553.1"/>
    <property type="molecule type" value="Genomic_DNA"/>
</dbReference>
<dbReference type="EMBL" id="CP002688">
    <property type="protein sequence ID" value="AED98037.1"/>
    <property type="molecule type" value="Genomic_DNA"/>
</dbReference>
<dbReference type="EMBL" id="AF325054">
    <property type="protein sequence ID" value="AAG40406.1"/>
    <property type="molecule type" value="mRNA"/>
</dbReference>
<dbReference type="EMBL" id="AY074293">
    <property type="protein sequence ID" value="AAL66990.1"/>
    <property type="molecule type" value="mRNA"/>
</dbReference>
<dbReference type="EMBL" id="AY091340">
    <property type="protein sequence ID" value="AAM14279.1"/>
    <property type="molecule type" value="mRNA"/>
</dbReference>
<dbReference type="PIR" id="S47135">
    <property type="entry name" value="S47135"/>
</dbReference>
<dbReference type="RefSeq" id="NP_201334.1">
    <molecule id="P46667-1"/>
    <property type="nucleotide sequence ID" value="NM_125929.3"/>
</dbReference>
<dbReference type="SMR" id="P46667"/>
<dbReference type="BioGRID" id="21898">
    <property type="interactions" value="7"/>
</dbReference>
<dbReference type="FunCoup" id="P46667">
    <property type="interactions" value="10"/>
</dbReference>
<dbReference type="STRING" id="3702.P46667"/>
<dbReference type="PaxDb" id="3702-AT5G65310.1"/>
<dbReference type="EnsemblPlants" id="AT5G65310.1">
    <molecule id="P46667-1"/>
    <property type="protein sequence ID" value="AT5G65310.1"/>
    <property type="gene ID" value="AT5G65310"/>
</dbReference>
<dbReference type="GeneID" id="836656"/>
<dbReference type="Gramene" id="AT5G65310.1">
    <molecule id="P46667-1"/>
    <property type="protein sequence ID" value="AT5G65310.1"/>
    <property type="gene ID" value="AT5G65310"/>
</dbReference>
<dbReference type="KEGG" id="ath:AT5G65310"/>
<dbReference type="Araport" id="AT5G65310"/>
<dbReference type="TAIR" id="AT5G65310">
    <property type="gene designation" value="HB5"/>
</dbReference>
<dbReference type="eggNOG" id="KOG0483">
    <property type="taxonomic scope" value="Eukaryota"/>
</dbReference>
<dbReference type="InParanoid" id="P46667"/>
<dbReference type="OMA" id="NIFPRTE"/>
<dbReference type="PhylomeDB" id="P46667"/>
<dbReference type="PRO" id="PR:P46667"/>
<dbReference type="Proteomes" id="UP000006548">
    <property type="component" value="Chromosome 5"/>
</dbReference>
<dbReference type="ExpressionAtlas" id="P46667">
    <property type="expression patterns" value="baseline and differential"/>
</dbReference>
<dbReference type="GO" id="GO:0005634">
    <property type="term" value="C:nucleus"/>
    <property type="evidence" value="ECO:0007669"/>
    <property type="project" value="UniProtKB-SubCell"/>
</dbReference>
<dbReference type="GO" id="GO:0003700">
    <property type="term" value="F:DNA-binding transcription factor activity"/>
    <property type="evidence" value="ECO:0000250"/>
    <property type="project" value="TAIR"/>
</dbReference>
<dbReference type="GO" id="GO:0000981">
    <property type="term" value="F:DNA-binding transcription factor activity, RNA polymerase II-specific"/>
    <property type="evidence" value="ECO:0007669"/>
    <property type="project" value="InterPro"/>
</dbReference>
<dbReference type="GO" id="GO:0042803">
    <property type="term" value="F:protein homodimerization activity"/>
    <property type="evidence" value="ECO:0000314"/>
    <property type="project" value="TAIR"/>
</dbReference>
<dbReference type="GO" id="GO:0043565">
    <property type="term" value="F:sequence-specific DNA binding"/>
    <property type="evidence" value="ECO:0000314"/>
    <property type="project" value="TAIR"/>
</dbReference>
<dbReference type="GO" id="GO:0000976">
    <property type="term" value="F:transcription cis-regulatory region binding"/>
    <property type="evidence" value="ECO:0000353"/>
    <property type="project" value="TAIR"/>
</dbReference>
<dbReference type="GO" id="GO:0009738">
    <property type="term" value="P:abscisic acid-activated signaling pathway"/>
    <property type="evidence" value="ECO:0000304"/>
    <property type="project" value="TAIR"/>
</dbReference>
<dbReference type="GO" id="GO:0045893">
    <property type="term" value="P:positive regulation of DNA-templated transcription"/>
    <property type="evidence" value="ECO:0000314"/>
    <property type="project" value="TAIR"/>
</dbReference>
<dbReference type="GO" id="GO:0009737">
    <property type="term" value="P:response to abscisic acid"/>
    <property type="evidence" value="ECO:0000314"/>
    <property type="project" value="TAIR"/>
</dbReference>
<dbReference type="CDD" id="cd00086">
    <property type="entry name" value="homeodomain"/>
    <property type="match status" value="1"/>
</dbReference>
<dbReference type="FunFam" id="1.10.10.60:FF:000159">
    <property type="entry name" value="Homeobox-leucine zipper protein HAT5"/>
    <property type="match status" value="1"/>
</dbReference>
<dbReference type="Gene3D" id="1.10.10.60">
    <property type="entry name" value="Homeodomain-like"/>
    <property type="match status" value="1"/>
</dbReference>
<dbReference type="InterPro" id="IPR001356">
    <property type="entry name" value="HD"/>
</dbReference>
<dbReference type="InterPro" id="IPR045224">
    <property type="entry name" value="HDZip_class_I_plant"/>
</dbReference>
<dbReference type="InterPro" id="IPR017970">
    <property type="entry name" value="Homeobox_CS"/>
</dbReference>
<dbReference type="InterPro" id="IPR009057">
    <property type="entry name" value="Homeodomain-like_sf"/>
</dbReference>
<dbReference type="InterPro" id="IPR000047">
    <property type="entry name" value="HTH_motif"/>
</dbReference>
<dbReference type="InterPro" id="IPR003106">
    <property type="entry name" value="Leu_zip_homeo"/>
</dbReference>
<dbReference type="PANTHER" id="PTHR24326">
    <property type="entry name" value="HOMEOBOX-LEUCINE ZIPPER PROTEIN"/>
    <property type="match status" value="1"/>
</dbReference>
<dbReference type="PANTHER" id="PTHR24326:SF590">
    <property type="entry name" value="HOMEOBOX-LEUCINE ZIPPER PROTEIN ATHB-5"/>
    <property type="match status" value="1"/>
</dbReference>
<dbReference type="Pfam" id="PF02183">
    <property type="entry name" value="HALZ"/>
    <property type="match status" value="1"/>
</dbReference>
<dbReference type="Pfam" id="PF00046">
    <property type="entry name" value="Homeodomain"/>
    <property type="match status" value="1"/>
</dbReference>
<dbReference type="PRINTS" id="PR00031">
    <property type="entry name" value="HTHREPRESSR"/>
</dbReference>
<dbReference type="SMART" id="SM00389">
    <property type="entry name" value="HOX"/>
    <property type="match status" value="1"/>
</dbReference>
<dbReference type="SUPFAM" id="SSF46689">
    <property type="entry name" value="Homeodomain-like"/>
    <property type="match status" value="1"/>
</dbReference>
<dbReference type="PROSITE" id="PS00027">
    <property type="entry name" value="HOMEOBOX_1"/>
    <property type="match status" value="1"/>
</dbReference>
<dbReference type="PROSITE" id="PS50071">
    <property type="entry name" value="HOMEOBOX_2"/>
    <property type="match status" value="1"/>
</dbReference>
<keyword id="KW-0025">Alternative splicing</keyword>
<keyword id="KW-0238">DNA-binding</keyword>
<keyword id="KW-0371">Homeobox</keyword>
<keyword id="KW-0539">Nucleus</keyword>
<keyword id="KW-1185">Reference proteome</keyword>
<keyword id="KW-0804">Transcription</keyword>
<keyword id="KW-0805">Transcription regulation</keyword>
<sequence>MKRSRGSSDSLSGFLPIRHSTTDKQISPRPTTTGFLYSGAGDYSQMFDALEDDGSLEDLGGVGHASSTAAEKKRRLGVEQVKALEKNFEIDNKLEPERKVKLAQELGLQPRQVAIWFQNRRARWKTKQLERDYGVLKSNFDALKRNRDSLQRDNDSLLGQIKELKAKLNVEGVKGIEENGALKAVEANQSVMANNEVLELSHRSPSPPPHIPTDAPTSELAFEMFSIFPRTENFRDDPADSSDSSAVLNEEYSPNTVEAAGAVAATTVEMSTMGCFSQFVKMEEHEDLFSGEEACKLFADNEQWYCSDQWNS</sequence>
<reference key="1">
    <citation type="journal article" date="1994" name="Plant Mol. Biol.">
        <title>Expression patterns of novel genes encoding homeodomain leucine-zipper proteins in Arabidopsis thaliana.</title>
        <authorList>
            <person name="Soederman E."/>
            <person name="Mattsson J."/>
            <person name="Svenson M."/>
            <person name="Borkird C."/>
            <person name="Engstroem P."/>
        </authorList>
    </citation>
    <scope>NUCLEOTIDE SEQUENCE [MRNA]</scope>
    <source>
        <strain>cv. Columbia</strain>
    </source>
</reference>
<reference key="2">
    <citation type="journal article" date="1998" name="DNA Res.">
        <title>Structural analysis of Arabidopsis thaliana chromosome 5. V. Sequence features of the regions of 1,381,565 bp covered by twenty one physically assigned P1 and TAC clones.</title>
        <authorList>
            <person name="Kaneko T."/>
            <person name="Kotani H."/>
            <person name="Nakamura Y."/>
            <person name="Sato S."/>
            <person name="Asamizu E."/>
            <person name="Miyajima N."/>
            <person name="Tabata S."/>
        </authorList>
    </citation>
    <scope>NUCLEOTIDE SEQUENCE [LARGE SCALE GENOMIC DNA]</scope>
    <source>
        <strain>cv. Columbia</strain>
    </source>
</reference>
<reference key="3">
    <citation type="journal article" date="2017" name="Plant J.">
        <title>Araport11: a complete reannotation of the Arabidopsis thaliana reference genome.</title>
        <authorList>
            <person name="Cheng C.Y."/>
            <person name="Krishnakumar V."/>
            <person name="Chan A.P."/>
            <person name="Thibaud-Nissen F."/>
            <person name="Schobel S."/>
            <person name="Town C.D."/>
        </authorList>
    </citation>
    <scope>GENOME REANNOTATION</scope>
    <source>
        <strain>cv. Columbia</strain>
    </source>
</reference>
<reference key="4">
    <citation type="journal article" date="2003" name="Science">
        <title>Empirical analysis of transcriptional activity in the Arabidopsis genome.</title>
        <authorList>
            <person name="Yamada K."/>
            <person name="Lim J."/>
            <person name="Dale J.M."/>
            <person name="Chen H."/>
            <person name="Shinn P."/>
            <person name="Palm C.J."/>
            <person name="Southwick A.M."/>
            <person name="Wu H.C."/>
            <person name="Kim C.J."/>
            <person name="Nguyen M."/>
            <person name="Pham P.K."/>
            <person name="Cheuk R.F."/>
            <person name="Karlin-Newmann G."/>
            <person name="Liu S.X."/>
            <person name="Lam B."/>
            <person name="Sakano H."/>
            <person name="Wu T."/>
            <person name="Yu G."/>
            <person name="Miranda M."/>
            <person name="Quach H.L."/>
            <person name="Tripp M."/>
            <person name="Chang C.H."/>
            <person name="Lee J.M."/>
            <person name="Toriumi M.J."/>
            <person name="Chan M.M."/>
            <person name="Tang C.C."/>
            <person name="Onodera C.S."/>
            <person name="Deng J.M."/>
            <person name="Akiyama K."/>
            <person name="Ansari Y."/>
            <person name="Arakawa T."/>
            <person name="Banh J."/>
            <person name="Banno F."/>
            <person name="Bowser L."/>
            <person name="Brooks S.Y."/>
            <person name="Carninci P."/>
            <person name="Chao Q."/>
            <person name="Choy N."/>
            <person name="Enju A."/>
            <person name="Goldsmith A.D."/>
            <person name="Gurjal M."/>
            <person name="Hansen N.F."/>
            <person name="Hayashizaki Y."/>
            <person name="Johnson-Hopson C."/>
            <person name="Hsuan V.W."/>
            <person name="Iida K."/>
            <person name="Karnes M."/>
            <person name="Khan S."/>
            <person name="Koesema E."/>
            <person name="Ishida J."/>
            <person name="Jiang P.X."/>
            <person name="Jones T."/>
            <person name="Kawai J."/>
            <person name="Kamiya A."/>
            <person name="Meyers C."/>
            <person name="Nakajima M."/>
            <person name="Narusaka M."/>
            <person name="Seki M."/>
            <person name="Sakurai T."/>
            <person name="Satou M."/>
            <person name="Tamse R."/>
            <person name="Vaysberg M."/>
            <person name="Wallender E.K."/>
            <person name="Wong C."/>
            <person name="Yamamura Y."/>
            <person name="Yuan S."/>
            <person name="Shinozaki K."/>
            <person name="Davis R.W."/>
            <person name="Theologis A."/>
            <person name="Ecker J.R."/>
        </authorList>
    </citation>
    <scope>NUCLEOTIDE SEQUENCE [LARGE SCALE MRNA]</scope>
    <source>
        <strain>cv. Columbia</strain>
    </source>
</reference>
<reference key="5">
    <citation type="journal article" date="2003" name="Plant Mol. Biol.">
        <title>The Arabidopsis thaliana homeobox gene ATHB5 is a potential regulator of abscisic acid responsiveness in developing seedlings.</title>
        <authorList>
            <person name="Johannesson H."/>
            <person name="Wang Y."/>
            <person name="Hanson J."/>
            <person name="Engstroem P."/>
        </authorList>
    </citation>
    <scope>INDUCTION</scope>
    <scope>DEVELOPMENTAL STAGE</scope>
    <scope>FUNCTION</scope>
</reference>
<reference key="6">
    <citation type="journal article" date="2001" name="Plant Mol. Biol.">
        <title>DNA-binding and dimerization preferences of Arabidopsis homeodomain-leucine zipper transcription factors in vitro.</title>
        <authorList>
            <person name="Johannesson H."/>
            <person name="Wang Y."/>
            <person name="Engstroem P."/>
        </authorList>
    </citation>
    <scope>DNA-BINDING</scope>
</reference>
<reference key="7">
    <citation type="journal article" date="2005" name="Plant Physiol.">
        <title>Homeodomain leucine zipper class I genes in Arabidopsis. Expression patterns and phylogenetic relationships.</title>
        <authorList>
            <person name="Henriksson E."/>
            <person name="Olsson A.S.B."/>
            <person name="Johannesson H."/>
            <person name="Johansson H."/>
            <person name="Hanson J."/>
            <person name="Engstroem P."/>
            <person name="Soederman E."/>
        </authorList>
    </citation>
    <scope>GENE FAMILY</scope>
    <scope>TISSUE SPECIFICITY</scope>
    <scope>INDUCTION</scope>
</reference>